<accession>Q8AII2</accession>
<protein>
    <recommendedName>
        <fullName>Gag polyprotein</fullName>
    </recommendedName>
    <alternativeName>
        <fullName>Pr55Gag</fullName>
    </alternativeName>
    <component>
        <recommendedName>
            <fullName>Matrix protein p17</fullName>
            <shortName>MA</shortName>
        </recommendedName>
    </component>
    <component>
        <recommendedName>
            <fullName>Capsid protein p24</fullName>
            <shortName>CA</shortName>
        </recommendedName>
    </component>
    <component>
        <recommendedName>
            <fullName>Spacer peptide p2</fullName>
        </recommendedName>
    </component>
    <component>
        <recommendedName>
            <fullName>Nucleocapsid protein p7</fullName>
            <shortName>NC</shortName>
        </recommendedName>
    </component>
    <component>
        <recommendedName>
            <fullName>Spacer peptide p1</fullName>
        </recommendedName>
    </component>
    <component>
        <recommendedName>
            <fullName>p6-gag</fullName>
        </recommendedName>
    </component>
</protein>
<dbReference type="EMBL" id="AF447763">
    <property type="protein sequence ID" value="AAO13959.1"/>
    <property type="molecule type" value="Genomic_RNA"/>
</dbReference>
<dbReference type="SMR" id="Q8AII2"/>
<dbReference type="PRO" id="PR:Q8AII2"/>
<dbReference type="Proteomes" id="UP000007222">
    <property type="component" value="Segment"/>
</dbReference>
<dbReference type="GO" id="GO:0030430">
    <property type="term" value="C:host cell cytoplasm"/>
    <property type="evidence" value="ECO:0007669"/>
    <property type="project" value="UniProtKB-SubCell"/>
</dbReference>
<dbReference type="GO" id="GO:0042025">
    <property type="term" value="C:host cell nucleus"/>
    <property type="evidence" value="ECO:0007669"/>
    <property type="project" value="UniProtKB-SubCell"/>
</dbReference>
<dbReference type="GO" id="GO:0020002">
    <property type="term" value="C:host cell plasma membrane"/>
    <property type="evidence" value="ECO:0007669"/>
    <property type="project" value="UniProtKB-SubCell"/>
</dbReference>
<dbReference type="GO" id="GO:0016020">
    <property type="term" value="C:membrane"/>
    <property type="evidence" value="ECO:0007669"/>
    <property type="project" value="UniProtKB-KW"/>
</dbReference>
<dbReference type="GO" id="GO:0019013">
    <property type="term" value="C:viral nucleocapsid"/>
    <property type="evidence" value="ECO:0007669"/>
    <property type="project" value="UniProtKB-KW"/>
</dbReference>
<dbReference type="GO" id="GO:0003723">
    <property type="term" value="F:RNA binding"/>
    <property type="evidence" value="ECO:0007669"/>
    <property type="project" value="UniProtKB-KW"/>
</dbReference>
<dbReference type="GO" id="GO:0005198">
    <property type="term" value="F:structural molecule activity"/>
    <property type="evidence" value="ECO:0007669"/>
    <property type="project" value="InterPro"/>
</dbReference>
<dbReference type="GO" id="GO:0008270">
    <property type="term" value="F:zinc ion binding"/>
    <property type="evidence" value="ECO:0007669"/>
    <property type="project" value="UniProtKB-KW"/>
</dbReference>
<dbReference type="GO" id="GO:0039702">
    <property type="term" value="P:viral budding via host ESCRT complex"/>
    <property type="evidence" value="ECO:0007669"/>
    <property type="project" value="UniProtKB-KW"/>
</dbReference>
<dbReference type="GO" id="GO:0075523">
    <property type="term" value="P:viral translational frameshifting"/>
    <property type="evidence" value="ECO:0007669"/>
    <property type="project" value="UniProtKB-KW"/>
</dbReference>
<dbReference type="Gene3D" id="1.10.1200.30">
    <property type="match status" value="1"/>
</dbReference>
<dbReference type="Gene3D" id="1.10.375.10">
    <property type="entry name" value="Human Immunodeficiency Virus Type 1 Capsid Protein"/>
    <property type="match status" value="1"/>
</dbReference>
<dbReference type="Gene3D" id="1.10.150.90">
    <property type="entry name" value="Immunodeficiency lentiviruses, gag gene matrix protein p17"/>
    <property type="match status" value="1"/>
</dbReference>
<dbReference type="Gene3D" id="1.20.5.760">
    <property type="entry name" value="Single helix bin"/>
    <property type="match status" value="1"/>
</dbReference>
<dbReference type="Gene3D" id="4.10.60.10">
    <property type="entry name" value="Zinc finger, CCHC-type"/>
    <property type="match status" value="1"/>
</dbReference>
<dbReference type="InterPro" id="IPR045345">
    <property type="entry name" value="Gag_p24_C"/>
</dbReference>
<dbReference type="InterPro" id="IPR000071">
    <property type="entry name" value="Lentvrl_matrix_N"/>
</dbReference>
<dbReference type="InterPro" id="IPR012344">
    <property type="entry name" value="Matrix_HIV/RSV_N"/>
</dbReference>
<dbReference type="InterPro" id="IPR050195">
    <property type="entry name" value="Primate_lentivir_Gag_pol-like"/>
</dbReference>
<dbReference type="InterPro" id="IPR008916">
    <property type="entry name" value="Retrov_capsid_C"/>
</dbReference>
<dbReference type="InterPro" id="IPR008919">
    <property type="entry name" value="Retrov_capsid_N"/>
</dbReference>
<dbReference type="InterPro" id="IPR010999">
    <property type="entry name" value="Retrovr_matrix"/>
</dbReference>
<dbReference type="InterPro" id="IPR001878">
    <property type="entry name" value="Znf_CCHC"/>
</dbReference>
<dbReference type="InterPro" id="IPR036875">
    <property type="entry name" value="Znf_CCHC_sf"/>
</dbReference>
<dbReference type="PANTHER" id="PTHR40389">
    <property type="entry name" value="ENDOGENOUS RETROVIRUS GROUP K MEMBER 24 GAG POLYPROTEIN-RELATED"/>
    <property type="match status" value="1"/>
</dbReference>
<dbReference type="PANTHER" id="PTHR40389:SF3">
    <property type="entry name" value="IGE-BINDING PROTEIN"/>
    <property type="match status" value="1"/>
</dbReference>
<dbReference type="Pfam" id="PF00540">
    <property type="entry name" value="Gag_p17"/>
    <property type="match status" value="1"/>
</dbReference>
<dbReference type="Pfam" id="PF00607">
    <property type="entry name" value="Gag_p24"/>
    <property type="match status" value="1"/>
</dbReference>
<dbReference type="Pfam" id="PF19317">
    <property type="entry name" value="Gag_p24_C"/>
    <property type="match status" value="1"/>
</dbReference>
<dbReference type="Pfam" id="PF00098">
    <property type="entry name" value="zf-CCHC"/>
    <property type="match status" value="2"/>
</dbReference>
<dbReference type="PRINTS" id="PR00234">
    <property type="entry name" value="HIV1MATRIX"/>
</dbReference>
<dbReference type="SMART" id="SM00343">
    <property type="entry name" value="ZnF_C2HC"/>
    <property type="match status" value="2"/>
</dbReference>
<dbReference type="SUPFAM" id="SSF47836">
    <property type="entry name" value="Retroviral matrix proteins"/>
    <property type="match status" value="1"/>
</dbReference>
<dbReference type="SUPFAM" id="SSF47353">
    <property type="entry name" value="Retrovirus capsid dimerization domain-like"/>
    <property type="match status" value="1"/>
</dbReference>
<dbReference type="SUPFAM" id="SSF47943">
    <property type="entry name" value="Retrovirus capsid protein, N-terminal core domain"/>
    <property type="match status" value="1"/>
</dbReference>
<dbReference type="SUPFAM" id="SSF57756">
    <property type="entry name" value="Retrovirus zinc finger-like domains"/>
    <property type="match status" value="1"/>
</dbReference>
<dbReference type="PROSITE" id="PS50158">
    <property type="entry name" value="ZF_CCHC"/>
    <property type="match status" value="2"/>
</dbReference>
<feature type="initiator methionine" description="Removed; by host" evidence="1">
    <location>
        <position position="1"/>
    </location>
</feature>
<feature type="chain" id="PRO_0000261254" description="Gag polyprotein">
    <location>
        <begin position="2"/>
        <end position="524"/>
    </location>
</feature>
<feature type="chain" id="PRO_0000249368" description="Matrix protein p17" evidence="1">
    <location>
        <begin position="2"/>
        <end position="155"/>
    </location>
</feature>
<feature type="chain" id="PRO_0000249369" description="Capsid protein p24" evidence="1">
    <location>
        <begin position="156"/>
        <end position="389"/>
    </location>
</feature>
<feature type="peptide" id="PRO_0000249370" description="Spacer peptide p2" evidence="1">
    <location>
        <begin position="390"/>
        <end position="403"/>
    </location>
</feature>
<feature type="chain" id="PRO_0000249371" description="Nucleocapsid protein p7" evidence="1">
    <location>
        <begin position="404"/>
        <end position="463"/>
    </location>
</feature>
<feature type="peptide" id="PRO_0000249372" description="Spacer peptide p1" evidence="1">
    <location>
        <begin position="464"/>
        <end position="479"/>
    </location>
</feature>
<feature type="chain" id="PRO_0000249373" description="p6-gag" evidence="1">
    <location>
        <begin position="480"/>
        <end position="524"/>
    </location>
</feature>
<feature type="zinc finger region" description="CCHC-type 1" evidence="5">
    <location>
        <begin position="417"/>
        <end position="434"/>
    </location>
</feature>
<feature type="zinc finger region" description="CCHC-type 2" evidence="5">
    <location>
        <begin position="438"/>
        <end position="455"/>
    </location>
</feature>
<feature type="region of interest" description="Disordered" evidence="6">
    <location>
        <begin position="113"/>
        <end position="153"/>
    </location>
</feature>
<feature type="short sequence motif" description="Nuclear export signal" evidence="1">
    <location>
        <begin position="16"/>
        <end position="22"/>
    </location>
</feature>
<feature type="short sequence motif" description="Nuclear localization signal" evidence="1">
    <location>
        <begin position="26"/>
        <end position="32"/>
    </location>
</feature>
<feature type="short sequence motif" description="PTAP/PSAP motif" evidence="3">
    <location>
        <begin position="501"/>
        <end position="504"/>
    </location>
</feature>
<feature type="compositionally biased region" description="Polar residues" evidence="6">
    <location>
        <begin position="113"/>
        <end position="125"/>
    </location>
</feature>
<feature type="compositionally biased region" description="Polar residues" evidence="6">
    <location>
        <begin position="135"/>
        <end position="151"/>
    </location>
</feature>
<feature type="site" description="Cleavage; by viral protease" evidence="1">
    <location>
        <begin position="155"/>
        <end position="156"/>
    </location>
</feature>
<feature type="site" description="Cleavage; by viral protease" evidence="1">
    <location>
        <begin position="389"/>
        <end position="390"/>
    </location>
</feature>
<feature type="site" description="Cleavage; by viral protease" evidence="1">
    <location>
        <begin position="403"/>
        <end position="404"/>
    </location>
</feature>
<feature type="site" description="Cleavage; by viral protease" evidence="1">
    <location>
        <begin position="463"/>
        <end position="464"/>
    </location>
</feature>
<feature type="site" description="Cleavage; by viral protease" evidence="1">
    <location>
        <begin position="479"/>
        <end position="480"/>
    </location>
</feature>
<feature type="lipid moiety-binding region" description="N-myristoyl glycine; by host" evidence="1">
    <location>
        <position position="2"/>
    </location>
</feature>
<organismHost>
    <name type="scientific">Pan troglodytes</name>
    <name type="common">Chimpanzee</name>
    <dbReference type="NCBI Taxonomy" id="9598"/>
</organismHost>
<sequence>MGARASVLRGDKLDTWESIRLKSRGRKKYLIKHLVWAGSELQRFAMNPGLMENVEGCWKIILQLQPSVDIGSPEIISLFNTICVLYCVHAGERVQDTEEAVKIVKMKLTVQKNNSTATSSGQRQNAGEKEETVPPSGNTGNTGRATETPSGSRLYPVITDAQGVARHQPISPRTLNAWVRVIEEKGFNPEVIPMFSALSEGATPYDLNSMLNAVGEHQAAMQMLKEVINEEAAEWDRAHPAHAGPQQAGMLREPTGADIAGTTSTLQEQVLWMTTPQAQGGVPVGDIYKRWIILGLNKLVRMYSPVSILDIKQGPKEPFRDYVDRFYKTIRAEQASQPVKTWMTETLLVQNANPDCKHILKALGQGATLEEMLTACQGVGGPSHKAKILAEAMASATAGGVNMLQGGKRPPLKKGQLQCFNCGKVGHTARNCRAPRKKGCWRCGQEGHQMKDCTTRNNSTGVNFLGKRTPLWGCRPGNFVQNTPEKGKAQEQETAQTPVVPTAPPLEMTMKGGFSLKSIFGSDQ</sequence>
<evidence type="ECO:0000250" key="1"/>
<evidence type="ECO:0000250" key="2">
    <source>
        <dbReference type="UniProtKB" id="P04591"/>
    </source>
</evidence>
<evidence type="ECO:0000250" key="3">
    <source>
        <dbReference type="UniProtKB" id="P05893"/>
    </source>
</evidence>
<evidence type="ECO:0000250" key="4">
    <source>
        <dbReference type="UniProtKB" id="P12493"/>
    </source>
</evidence>
<evidence type="ECO:0000255" key="5">
    <source>
        <dbReference type="PROSITE-ProRule" id="PRU00047"/>
    </source>
</evidence>
<evidence type="ECO:0000256" key="6">
    <source>
        <dbReference type="SAM" id="MobiDB-lite"/>
    </source>
</evidence>
<evidence type="ECO:0000305" key="7"/>
<comment type="function">
    <text evidence="1">Matrix protein p17 targets Gag and Gag-Pol polyproteins to the plasma membrane via a multipartite membrane binding signal, that includes its myristoylated N-terminus. Also mediates nuclear localization of the preintegration complex. Implicated in the release from host cell mediated by Vpu (By similarity).</text>
</comment>
<comment type="function">
    <text evidence="1">Capsid protein p24 forms the conical core of the virus that encapsulates the genomic RNA-nucleocapsid complex.</text>
</comment>
<comment type="function">
    <text evidence="1">Nucleocapsid protein p7 encapsulates and protects viral dimeric unspliced (genomic) RNA. Binds these RNAs through its zinc fingers (By similarity).</text>
</comment>
<comment type="function">
    <text evidence="1">p6-gag plays a role in budding of the assembled particle by interacting with the host class E VPS proteins TSG101 and PDCD6IP/AIP1.</text>
</comment>
<comment type="subunit">
    <molecule>Matrix protein p17</molecule>
    <text evidence="2 4">Homotrimer. Interacts with gp41 (via C-terminus).</text>
</comment>
<comment type="subunit">
    <molecule>p6-gag</molecule>
    <text evidence="4">Interacts with host TSG101 (By similarity).</text>
</comment>
<comment type="subcellular location">
    <molecule>Matrix protein p17</molecule>
    <subcellularLocation>
        <location evidence="7">Virion</location>
    </subcellularLocation>
    <subcellularLocation>
        <location evidence="1">Host nucleus</location>
    </subcellularLocation>
    <subcellularLocation>
        <location evidence="1">Host cytoplasm</location>
    </subcellularLocation>
    <subcellularLocation>
        <location evidence="7">Host cell membrane</location>
        <topology evidence="7">Lipid-anchor</topology>
    </subcellularLocation>
    <text evidence="1">Following virus entry, the nuclear localization signal (NLS) of the matrix protein participates with Vpr to the nuclear localization of the viral genome. During virus production, the nuclear export activity of the matrix protein counteracts the NLS to maintain the Gag and Gag-Pol polyproteins in the cytoplasm, thereby directing unspliced RNA to the plasma membrane (By similarity).</text>
</comment>
<comment type="subcellular location">
    <molecule>Capsid protein p24</molecule>
    <subcellularLocation>
        <location evidence="7">Virion</location>
    </subcellularLocation>
</comment>
<comment type="subcellular location">
    <molecule>Nucleocapsid protein p7</molecule>
    <subcellularLocation>
        <location evidence="7">Virion</location>
    </subcellularLocation>
</comment>
<comment type="alternative products">
    <event type="ribosomal frameshifting"/>
    <isoform>
        <id>Q8AII2-1</id>
        <name>Gag polyprotein</name>
        <sequence type="displayed"/>
    </isoform>
    <isoform>
        <id>Q8AII1-1</id>
        <name>Gag-Pol polyprotein</name>
        <sequence type="external"/>
    </isoform>
    <text>Translation results in the formation of the Gag polyprotein most of the time. Ribosomal frameshifting at the gag-pol genes boundary occurs at low frequency and produces the Gag-Pol polyprotein. This strategy of translation probably allows the virus to modulate the quantity of each viral protein. Maintenance of a correct Gag to Gag-Pol ratio is essential for RNA dimerization and viral infectivity.</text>
</comment>
<comment type="domain">
    <text evidence="3">Late-budding domains (L domains) are short sequence motifs essential for viral particle budding. They recruit proteins of the host ESCRT machinery (Endosomal Sorting Complex Required for Transport) or ESCRT-associated proteins. p6-gag contains one L domain: a PTAP/PSAP motif, which interacts with the UEV domain of TSG101.</text>
</comment>
<comment type="PTM">
    <text evidence="1">Capsid protein p24 is phosphorylated.</text>
</comment>
<comment type="PTM">
    <text evidence="1">Specific enzymatic cleavages by the viral protease yield mature proteins. The polyprotein is cleaved during and after budding, this process is termed maturation (By similarity).</text>
</comment>
<comment type="miscellaneous">
    <molecule>Isoform Gag polyprotein</molecule>
    <text>Produced by conventional translation.</text>
</comment>
<comment type="similarity">
    <text evidence="7">Belongs to the primate lentivirus group gag polyprotein family.</text>
</comment>
<keyword id="KW-0167">Capsid protein</keyword>
<keyword id="KW-1032">Host cell membrane</keyword>
<keyword id="KW-1035">Host cytoplasm</keyword>
<keyword id="KW-1043">Host membrane</keyword>
<keyword id="KW-1048">Host nucleus</keyword>
<keyword id="KW-0945">Host-virus interaction</keyword>
<keyword id="KW-0449">Lipoprotein</keyword>
<keyword id="KW-0472">Membrane</keyword>
<keyword id="KW-0479">Metal-binding</keyword>
<keyword id="KW-0519">Myristate</keyword>
<keyword id="KW-0597">Phosphoprotein</keyword>
<keyword id="KW-1185">Reference proteome</keyword>
<keyword id="KW-0677">Repeat</keyword>
<keyword id="KW-0688">Ribosomal frameshifting</keyword>
<keyword id="KW-0694">RNA-binding</keyword>
<keyword id="KW-1198">Viral budding</keyword>
<keyword id="KW-1187">Viral budding via the host ESCRT complexes</keyword>
<keyword id="KW-0543">Viral nucleoprotein</keyword>
<keyword id="KW-1188">Viral release from host cell</keyword>
<keyword id="KW-0946">Virion</keyword>
<keyword id="KW-0862">Zinc</keyword>
<keyword id="KW-0863">Zinc-finger</keyword>
<name>GAG_SIVTN</name>
<organism>
    <name type="scientific">Simian immunodeficiency virus (isolate TAN1)</name>
    <name type="common">SIV-cpz</name>
    <name type="synonym">Chimpanzee immunodeficiency virus</name>
    <dbReference type="NCBI Taxonomy" id="388910"/>
    <lineage>
        <taxon>Viruses</taxon>
        <taxon>Riboviria</taxon>
        <taxon>Pararnavirae</taxon>
        <taxon>Artverviricota</taxon>
        <taxon>Revtraviricetes</taxon>
        <taxon>Ortervirales</taxon>
        <taxon>Retroviridae</taxon>
        <taxon>Orthoretrovirinae</taxon>
        <taxon>Lentivirus</taxon>
        <taxon>Simian immunodeficiency virus</taxon>
    </lineage>
</organism>
<gene>
    <name type="primary">gag</name>
</gene>
<reference key="1">
    <citation type="journal article" date="2003" name="J. Virol.">
        <title>Amplification of a complete simian immunodeficiency virus genome from fecal RNA of a wild chimpanzee.</title>
        <authorList>
            <person name="Santiago M.L."/>
            <person name="Bibollet-Ruche F."/>
            <person name="Bailes E."/>
            <person name="Kamenya S."/>
            <person name="Muller M.N."/>
            <person name="Lukasik M."/>
            <person name="Pusey A.E."/>
            <person name="Collins D.A."/>
            <person name="Wrangham R.W."/>
            <person name="Goodall J."/>
            <person name="Shaw G.M."/>
            <person name="Sharp P.M."/>
            <person name="Hahn B.H."/>
        </authorList>
    </citation>
    <scope>NUCLEOTIDE SEQUENCE [GENOMIC RNA]</scope>
</reference>
<proteinExistence type="inferred from homology"/>